<reference key="1">
    <citation type="journal article" date="2007" name="J. Bacteriol.">
        <title>The complete genome sequence of the lactic acid bacterial paradigm Lactococcus lactis subsp. cremoris MG1363.</title>
        <authorList>
            <person name="Wegmann U."/>
            <person name="O'Connell-Motherway M."/>
            <person name="Zomer A."/>
            <person name="Buist G."/>
            <person name="Shearman C."/>
            <person name="Canchaya C."/>
            <person name="Ventura M."/>
            <person name="Goesmann A."/>
            <person name="Gasson M.J."/>
            <person name="Kuipers O.P."/>
            <person name="van Sinderen D."/>
            <person name="Kok J."/>
        </authorList>
    </citation>
    <scope>NUCLEOTIDE SEQUENCE [LARGE SCALE GENOMIC DNA]</scope>
    <source>
        <strain>MG1363</strain>
    </source>
</reference>
<organism>
    <name type="scientific">Lactococcus lactis subsp. cremoris (strain MG1363)</name>
    <dbReference type="NCBI Taxonomy" id="416870"/>
    <lineage>
        <taxon>Bacteria</taxon>
        <taxon>Bacillati</taxon>
        <taxon>Bacillota</taxon>
        <taxon>Bacilli</taxon>
        <taxon>Lactobacillales</taxon>
        <taxon>Streptococcaceae</taxon>
        <taxon>Lactococcus</taxon>
        <taxon>Lactococcus cremoris subsp. cremoris</taxon>
    </lineage>
</organism>
<evidence type="ECO:0000255" key="1">
    <source>
        <dbReference type="HAMAP-Rule" id="MF_00023"/>
    </source>
</evidence>
<protein>
    <recommendedName>
        <fullName evidence="1">SsrA-binding protein</fullName>
    </recommendedName>
    <alternativeName>
        <fullName evidence="1">Small protein B</fullName>
    </alternativeName>
</protein>
<proteinExistence type="inferred from homology"/>
<comment type="function">
    <text evidence="1">Required for rescue of stalled ribosomes mediated by trans-translation. Binds to transfer-messenger RNA (tmRNA), required for stable association of tmRNA with ribosomes. tmRNA and SmpB together mimic tRNA shape, replacing the anticodon stem-loop with SmpB. tmRNA is encoded by the ssrA gene; the 2 termini fold to resemble tRNA(Ala) and it encodes a 'tag peptide', a short internal open reading frame. During trans-translation Ala-aminoacylated tmRNA acts like a tRNA, entering the A-site of stalled ribosomes, displacing the stalled mRNA. The ribosome then switches to translate the ORF on the tmRNA; the nascent peptide is terminated with the 'tag peptide' encoded by the tmRNA and targeted for degradation. The ribosome is freed to recommence translation, which seems to be the essential function of trans-translation.</text>
</comment>
<comment type="subcellular location">
    <subcellularLocation>
        <location evidence="1">Cytoplasm</location>
    </subcellularLocation>
    <text evidence="1">The tmRNA-SmpB complex associates with stalled 70S ribosomes.</text>
</comment>
<comment type="similarity">
    <text evidence="1">Belongs to the SmpB family.</text>
</comment>
<gene>
    <name evidence="1" type="primary">smpB</name>
    <name type="ordered locus">llmg_1902</name>
</gene>
<accession>A2RME2</accession>
<keyword id="KW-0963">Cytoplasm</keyword>
<keyword id="KW-0694">RNA-binding</keyword>
<sequence>MVKNTEDKPLAQNKKARHDYEIYETFEAGIVLTGTEIKSVRQAKIQLKDGFARVRNGEVWLSNVHIAPFEQGNIFNVEELRTRKLLLNKKEIAKIDKELSGTGITFIPLKVYLKNGFAKVLMGLARGKKDYDKRESLKRKEQNRDIARQLKAYNR</sequence>
<name>SSRP_LACLM</name>
<dbReference type="EMBL" id="AM406671">
    <property type="protein sequence ID" value="CAL98471.1"/>
    <property type="molecule type" value="Genomic_DNA"/>
</dbReference>
<dbReference type="RefSeq" id="WP_011676717.1">
    <property type="nucleotide sequence ID" value="NC_009004.1"/>
</dbReference>
<dbReference type="SMR" id="A2RME2"/>
<dbReference type="STRING" id="416870.llmg_1902"/>
<dbReference type="GeneID" id="61109980"/>
<dbReference type="KEGG" id="llm:llmg_1902"/>
<dbReference type="eggNOG" id="COG0691">
    <property type="taxonomic scope" value="Bacteria"/>
</dbReference>
<dbReference type="HOGENOM" id="CLU_108953_0_1_9"/>
<dbReference type="OrthoDB" id="9805462at2"/>
<dbReference type="PhylomeDB" id="A2RME2"/>
<dbReference type="Proteomes" id="UP000000364">
    <property type="component" value="Chromosome"/>
</dbReference>
<dbReference type="GO" id="GO:0005829">
    <property type="term" value="C:cytosol"/>
    <property type="evidence" value="ECO:0007669"/>
    <property type="project" value="TreeGrafter"/>
</dbReference>
<dbReference type="GO" id="GO:0003723">
    <property type="term" value="F:RNA binding"/>
    <property type="evidence" value="ECO:0007669"/>
    <property type="project" value="UniProtKB-UniRule"/>
</dbReference>
<dbReference type="GO" id="GO:0070929">
    <property type="term" value="P:trans-translation"/>
    <property type="evidence" value="ECO:0007669"/>
    <property type="project" value="UniProtKB-UniRule"/>
</dbReference>
<dbReference type="CDD" id="cd09294">
    <property type="entry name" value="SmpB"/>
    <property type="match status" value="1"/>
</dbReference>
<dbReference type="Gene3D" id="2.40.280.10">
    <property type="match status" value="1"/>
</dbReference>
<dbReference type="HAMAP" id="MF_00023">
    <property type="entry name" value="SmpB"/>
    <property type="match status" value="1"/>
</dbReference>
<dbReference type="InterPro" id="IPR023620">
    <property type="entry name" value="SmpB"/>
</dbReference>
<dbReference type="InterPro" id="IPR000037">
    <property type="entry name" value="SsrA-bd_prot"/>
</dbReference>
<dbReference type="InterPro" id="IPR020081">
    <property type="entry name" value="SsrA-bd_prot_CS"/>
</dbReference>
<dbReference type="NCBIfam" id="NF003843">
    <property type="entry name" value="PRK05422.1"/>
    <property type="match status" value="1"/>
</dbReference>
<dbReference type="NCBIfam" id="TIGR00086">
    <property type="entry name" value="smpB"/>
    <property type="match status" value="1"/>
</dbReference>
<dbReference type="PANTHER" id="PTHR30308:SF2">
    <property type="entry name" value="SSRA-BINDING PROTEIN"/>
    <property type="match status" value="1"/>
</dbReference>
<dbReference type="PANTHER" id="PTHR30308">
    <property type="entry name" value="TMRNA-BINDING COMPONENT OF TRANS-TRANSLATION TAGGING COMPLEX"/>
    <property type="match status" value="1"/>
</dbReference>
<dbReference type="Pfam" id="PF01668">
    <property type="entry name" value="SmpB"/>
    <property type="match status" value="1"/>
</dbReference>
<dbReference type="SUPFAM" id="SSF74982">
    <property type="entry name" value="Small protein B (SmpB)"/>
    <property type="match status" value="1"/>
</dbReference>
<dbReference type="PROSITE" id="PS01317">
    <property type="entry name" value="SSRP"/>
    <property type="match status" value="1"/>
</dbReference>
<feature type="chain" id="PRO_1000002073" description="SsrA-binding protein">
    <location>
        <begin position="1"/>
        <end position="155"/>
    </location>
</feature>